<sequence>MIQPQTLLNVADNSGARKLMCIRVIGAAGNQRYARIGDVIVAVIKDALPQMPLERSEVIRAVIVRTCKEFKCEDGIIIRYDDNAAVIIDQKGNPKGTRVFGAIAEELRELNFTKIVSLAPEVL</sequence>
<comment type="function">
    <text evidence="1">Binds to 23S rRNA.</text>
</comment>
<comment type="subunit">
    <text evidence="1">Part of the 50S ribosomal subunit.</text>
</comment>
<comment type="subcellular location">
    <subcellularLocation>
        <location>Plastid</location>
        <location>Chloroplast</location>
    </subcellularLocation>
</comment>
<comment type="similarity">
    <text evidence="1">Belongs to the universal ribosomal protein uL14 family.</text>
</comment>
<protein>
    <recommendedName>
        <fullName evidence="1">Large ribosomal subunit protein uL14c</fullName>
    </recommendedName>
    <alternativeName>
        <fullName evidence="2">50S ribosomal protein L14, chloroplastic</fullName>
    </alternativeName>
</protein>
<dbReference type="EMBL" id="AM777385">
    <property type="protein sequence ID" value="CAO86012.1"/>
    <property type="molecule type" value="Genomic_DNA"/>
</dbReference>
<dbReference type="RefSeq" id="YP_001531318.1">
    <property type="nucleotide sequence ID" value="NC_009950.1"/>
</dbReference>
<dbReference type="SMR" id="A8Y9C3"/>
<dbReference type="GeneID" id="5696647"/>
<dbReference type="KEGG" id="lper:5696647"/>
<dbReference type="GO" id="GO:0009507">
    <property type="term" value="C:chloroplast"/>
    <property type="evidence" value="ECO:0007669"/>
    <property type="project" value="UniProtKB-SubCell"/>
</dbReference>
<dbReference type="GO" id="GO:0022625">
    <property type="term" value="C:cytosolic large ribosomal subunit"/>
    <property type="evidence" value="ECO:0007669"/>
    <property type="project" value="TreeGrafter"/>
</dbReference>
<dbReference type="GO" id="GO:0070180">
    <property type="term" value="F:large ribosomal subunit rRNA binding"/>
    <property type="evidence" value="ECO:0007669"/>
    <property type="project" value="TreeGrafter"/>
</dbReference>
<dbReference type="GO" id="GO:0003735">
    <property type="term" value="F:structural constituent of ribosome"/>
    <property type="evidence" value="ECO:0007669"/>
    <property type="project" value="InterPro"/>
</dbReference>
<dbReference type="GO" id="GO:0006412">
    <property type="term" value="P:translation"/>
    <property type="evidence" value="ECO:0007669"/>
    <property type="project" value="UniProtKB-UniRule"/>
</dbReference>
<dbReference type="CDD" id="cd00337">
    <property type="entry name" value="Ribosomal_uL14"/>
    <property type="match status" value="1"/>
</dbReference>
<dbReference type="FunFam" id="2.40.150.20:FF:000002">
    <property type="entry name" value="50S ribosomal protein L14, chloroplastic"/>
    <property type="match status" value="1"/>
</dbReference>
<dbReference type="Gene3D" id="2.40.150.20">
    <property type="entry name" value="Ribosomal protein L14"/>
    <property type="match status" value="1"/>
</dbReference>
<dbReference type="HAMAP" id="MF_01367">
    <property type="entry name" value="Ribosomal_uL14"/>
    <property type="match status" value="1"/>
</dbReference>
<dbReference type="InterPro" id="IPR000218">
    <property type="entry name" value="Ribosomal_uL14"/>
</dbReference>
<dbReference type="InterPro" id="IPR005745">
    <property type="entry name" value="Ribosomal_uL14_bac-type"/>
</dbReference>
<dbReference type="InterPro" id="IPR019972">
    <property type="entry name" value="Ribosomal_uL14_CS"/>
</dbReference>
<dbReference type="InterPro" id="IPR036853">
    <property type="entry name" value="Ribosomal_uL14_sf"/>
</dbReference>
<dbReference type="NCBIfam" id="TIGR01067">
    <property type="entry name" value="rplN_bact"/>
    <property type="match status" value="1"/>
</dbReference>
<dbReference type="PANTHER" id="PTHR11761">
    <property type="entry name" value="50S/60S RIBOSOMAL PROTEIN L14/L23"/>
    <property type="match status" value="1"/>
</dbReference>
<dbReference type="PANTHER" id="PTHR11761:SF3">
    <property type="entry name" value="LARGE RIBOSOMAL SUBUNIT PROTEIN UL14M"/>
    <property type="match status" value="1"/>
</dbReference>
<dbReference type="Pfam" id="PF00238">
    <property type="entry name" value="Ribosomal_L14"/>
    <property type="match status" value="1"/>
</dbReference>
<dbReference type="SMART" id="SM01374">
    <property type="entry name" value="Ribosomal_L14"/>
    <property type="match status" value="1"/>
</dbReference>
<dbReference type="SUPFAM" id="SSF50193">
    <property type="entry name" value="Ribosomal protein L14"/>
    <property type="match status" value="1"/>
</dbReference>
<dbReference type="PROSITE" id="PS00049">
    <property type="entry name" value="RIBOSOMAL_L14"/>
    <property type="match status" value="1"/>
</dbReference>
<geneLocation type="chloroplast"/>
<keyword id="KW-0150">Chloroplast</keyword>
<keyword id="KW-0934">Plastid</keyword>
<keyword id="KW-0687">Ribonucleoprotein</keyword>
<keyword id="KW-0689">Ribosomal protein</keyword>
<keyword id="KW-0694">RNA-binding</keyword>
<keyword id="KW-0699">rRNA-binding</keyword>
<evidence type="ECO:0000255" key="1">
    <source>
        <dbReference type="HAMAP-Rule" id="MF_01367"/>
    </source>
</evidence>
<evidence type="ECO:0000305" key="2"/>
<name>RK14_LOLPR</name>
<accession>A8Y9C3</accession>
<proteinExistence type="inferred from homology"/>
<gene>
    <name evidence="1" type="primary">rpl14</name>
    <name type="ordered locus">LopeCp078</name>
</gene>
<feature type="chain" id="PRO_0000355889" description="Large ribosomal subunit protein uL14c">
    <location>
        <begin position="1"/>
        <end position="123"/>
    </location>
</feature>
<organism>
    <name type="scientific">Lolium perenne</name>
    <name type="common">Perennial ryegrass</name>
    <dbReference type="NCBI Taxonomy" id="4522"/>
    <lineage>
        <taxon>Eukaryota</taxon>
        <taxon>Viridiplantae</taxon>
        <taxon>Streptophyta</taxon>
        <taxon>Embryophyta</taxon>
        <taxon>Tracheophyta</taxon>
        <taxon>Spermatophyta</taxon>
        <taxon>Magnoliopsida</taxon>
        <taxon>Liliopsida</taxon>
        <taxon>Poales</taxon>
        <taxon>Poaceae</taxon>
        <taxon>BOP clade</taxon>
        <taxon>Pooideae</taxon>
        <taxon>Poodae</taxon>
        <taxon>Poeae</taxon>
        <taxon>Poeae Chloroplast Group 2 (Poeae type)</taxon>
        <taxon>Loliodinae</taxon>
        <taxon>Loliinae</taxon>
        <taxon>Lolium</taxon>
    </lineage>
</organism>
<reference key="1">
    <citation type="journal article" date="2008" name="PLoS ONE">
        <title>An optimized chloroplast DNA extraction protocol for grasses (Poaceae) proves suitable for whole plastid genome sequencing and SNP detection.</title>
        <authorList>
            <person name="Diekmann K."/>
            <person name="Hodkinson T.R."/>
            <person name="Fricke E."/>
            <person name="Barth S."/>
        </authorList>
    </citation>
    <scope>NUCLEOTIDE SEQUENCE [LARGE SCALE GENOMIC DNA]</scope>
    <source>
        <strain>cv. Cashel</strain>
    </source>
</reference>